<proteinExistence type="inferred from homology"/>
<name>RPOC1_FAGEA</name>
<comment type="function">
    <text evidence="1">DNA-dependent RNA polymerase catalyzes the transcription of DNA into RNA using the four ribonucleoside triphosphates as substrates.</text>
</comment>
<comment type="catalytic activity">
    <reaction evidence="1">
        <text>RNA(n) + a ribonucleoside 5'-triphosphate = RNA(n+1) + diphosphate</text>
        <dbReference type="Rhea" id="RHEA:21248"/>
        <dbReference type="Rhea" id="RHEA-COMP:14527"/>
        <dbReference type="Rhea" id="RHEA-COMP:17342"/>
        <dbReference type="ChEBI" id="CHEBI:33019"/>
        <dbReference type="ChEBI" id="CHEBI:61557"/>
        <dbReference type="ChEBI" id="CHEBI:140395"/>
        <dbReference type="EC" id="2.7.7.6"/>
    </reaction>
</comment>
<comment type="cofactor">
    <cofactor evidence="1">
        <name>Mg(2+)</name>
        <dbReference type="ChEBI" id="CHEBI:18420"/>
    </cofactor>
    <text evidence="1">Binds 1 Mg(2+) ion per subunit.</text>
</comment>
<comment type="cofactor">
    <cofactor evidence="1">
        <name>Zn(2+)</name>
        <dbReference type="ChEBI" id="CHEBI:29105"/>
    </cofactor>
    <text evidence="1">Binds 1 Zn(2+) ion per subunit.</text>
</comment>
<comment type="subunit">
    <text evidence="1">In plastids the minimal PEP RNA polymerase catalytic core is composed of four subunits: alpha, beta, beta', and beta''. When a (nuclear-encoded) sigma factor is associated with the core the holoenzyme is formed, which can initiate transcription.</text>
</comment>
<comment type="subcellular location">
    <subcellularLocation>
        <location evidence="1">Plastid</location>
        <location evidence="1">Chloroplast</location>
    </subcellularLocation>
</comment>
<comment type="similarity">
    <text evidence="1">Belongs to the RNA polymerase beta' chain family. RpoC1 subfamily.</text>
</comment>
<keyword id="KW-0150">Chloroplast</keyword>
<keyword id="KW-0240">DNA-directed RNA polymerase</keyword>
<keyword id="KW-0460">Magnesium</keyword>
<keyword id="KW-0479">Metal-binding</keyword>
<keyword id="KW-0548">Nucleotidyltransferase</keyword>
<keyword id="KW-0934">Plastid</keyword>
<keyword id="KW-0804">Transcription</keyword>
<keyword id="KW-0808">Transferase</keyword>
<keyword id="KW-0862">Zinc</keyword>
<evidence type="ECO:0000255" key="1">
    <source>
        <dbReference type="HAMAP-Rule" id="MF_01323"/>
    </source>
</evidence>
<organism>
    <name type="scientific">Fagopyrum esculentum subsp. ancestrale</name>
    <name type="common">Wild buckwheat</name>
    <dbReference type="NCBI Taxonomy" id="180217"/>
    <lineage>
        <taxon>Eukaryota</taxon>
        <taxon>Viridiplantae</taxon>
        <taxon>Streptophyta</taxon>
        <taxon>Embryophyta</taxon>
        <taxon>Tracheophyta</taxon>
        <taxon>Spermatophyta</taxon>
        <taxon>Magnoliopsida</taxon>
        <taxon>eudicotyledons</taxon>
        <taxon>Gunneridae</taxon>
        <taxon>Pentapetalae</taxon>
        <taxon>Caryophyllales</taxon>
        <taxon>Polygonaceae</taxon>
        <taxon>Polygonoideae</taxon>
        <taxon>Fagopyreae</taxon>
        <taxon>Fagopyrum</taxon>
    </lineage>
</organism>
<geneLocation type="chloroplast"/>
<feature type="chain" id="PRO_0000353489" description="DNA-directed RNA polymerase subunit beta'">
    <location>
        <begin position="1"/>
        <end position="676"/>
    </location>
</feature>
<feature type="binding site" evidence="1">
    <location>
        <position position="69"/>
    </location>
    <ligand>
        <name>Zn(2+)</name>
        <dbReference type="ChEBI" id="CHEBI:29105"/>
    </ligand>
</feature>
<feature type="binding site" evidence="1">
    <location>
        <position position="71"/>
    </location>
    <ligand>
        <name>Zn(2+)</name>
        <dbReference type="ChEBI" id="CHEBI:29105"/>
    </ligand>
</feature>
<feature type="binding site" evidence="1">
    <location>
        <position position="87"/>
    </location>
    <ligand>
        <name>Zn(2+)</name>
        <dbReference type="ChEBI" id="CHEBI:29105"/>
    </ligand>
</feature>
<feature type="binding site" evidence="1">
    <location>
        <position position="90"/>
    </location>
    <ligand>
        <name>Zn(2+)</name>
        <dbReference type="ChEBI" id="CHEBI:29105"/>
    </ligand>
</feature>
<feature type="binding site" evidence="1">
    <location>
        <position position="485"/>
    </location>
    <ligand>
        <name>Mg(2+)</name>
        <dbReference type="ChEBI" id="CHEBI:18420"/>
    </ligand>
</feature>
<feature type="binding site" evidence="1">
    <location>
        <position position="487"/>
    </location>
    <ligand>
        <name>Mg(2+)</name>
        <dbReference type="ChEBI" id="CHEBI:18420"/>
    </ligand>
</feature>
<feature type="binding site" evidence="1">
    <location>
        <position position="489"/>
    </location>
    <ligand>
        <name>Mg(2+)</name>
        <dbReference type="ChEBI" id="CHEBI:18420"/>
    </ligand>
</feature>
<dbReference type="EC" id="2.7.7.6" evidence="1"/>
<dbReference type="EMBL" id="EU254477">
    <property type="protein sequence ID" value="ABY79723.1"/>
    <property type="molecule type" value="Genomic_DNA"/>
</dbReference>
<dbReference type="RefSeq" id="YP_001936508.1">
    <property type="nucleotide sequence ID" value="NC_010776.1"/>
</dbReference>
<dbReference type="SMR" id="B2XWP0"/>
<dbReference type="GeneID" id="6335954"/>
<dbReference type="GO" id="GO:0009507">
    <property type="term" value="C:chloroplast"/>
    <property type="evidence" value="ECO:0007669"/>
    <property type="project" value="UniProtKB-SubCell"/>
</dbReference>
<dbReference type="GO" id="GO:0000428">
    <property type="term" value="C:DNA-directed RNA polymerase complex"/>
    <property type="evidence" value="ECO:0007669"/>
    <property type="project" value="UniProtKB-KW"/>
</dbReference>
<dbReference type="GO" id="GO:0005739">
    <property type="term" value="C:mitochondrion"/>
    <property type="evidence" value="ECO:0007669"/>
    <property type="project" value="GOC"/>
</dbReference>
<dbReference type="GO" id="GO:0003677">
    <property type="term" value="F:DNA binding"/>
    <property type="evidence" value="ECO:0007669"/>
    <property type="project" value="UniProtKB-UniRule"/>
</dbReference>
<dbReference type="GO" id="GO:0003899">
    <property type="term" value="F:DNA-directed RNA polymerase activity"/>
    <property type="evidence" value="ECO:0007669"/>
    <property type="project" value="UniProtKB-UniRule"/>
</dbReference>
<dbReference type="GO" id="GO:0000287">
    <property type="term" value="F:magnesium ion binding"/>
    <property type="evidence" value="ECO:0007669"/>
    <property type="project" value="UniProtKB-UniRule"/>
</dbReference>
<dbReference type="GO" id="GO:0008270">
    <property type="term" value="F:zinc ion binding"/>
    <property type="evidence" value="ECO:0007669"/>
    <property type="project" value="UniProtKB-UniRule"/>
</dbReference>
<dbReference type="GO" id="GO:0006351">
    <property type="term" value="P:DNA-templated transcription"/>
    <property type="evidence" value="ECO:0007669"/>
    <property type="project" value="UniProtKB-UniRule"/>
</dbReference>
<dbReference type="FunFam" id="4.10.860.120:FF:000007">
    <property type="entry name" value="DNA-directed RNA polymerase subunit gamma"/>
    <property type="match status" value="1"/>
</dbReference>
<dbReference type="Gene3D" id="1.10.40.90">
    <property type="match status" value="1"/>
</dbReference>
<dbReference type="Gene3D" id="2.40.40.20">
    <property type="match status" value="1"/>
</dbReference>
<dbReference type="Gene3D" id="4.10.860.120">
    <property type="entry name" value="RNA polymerase II, clamp domain"/>
    <property type="match status" value="1"/>
</dbReference>
<dbReference type="Gene3D" id="1.10.274.100">
    <property type="entry name" value="RNA polymerase Rpb1, domain 3"/>
    <property type="match status" value="1"/>
</dbReference>
<dbReference type="HAMAP" id="MF_01323">
    <property type="entry name" value="RNApol_bact_RpoC1"/>
    <property type="match status" value="1"/>
</dbReference>
<dbReference type="InterPro" id="IPR045867">
    <property type="entry name" value="DNA-dir_RpoC_beta_prime"/>
</dbReference>
<dbReference type="InterPro" id="IPR000722">
    <property type="entry name" value="RNA_pol_asu"/>
</dbReference>
<dbReference type="InterPro" id="IPR006592">
    <property type="entry name" value="RNA_pol_N"/>
</dbReference>
<dbReference type="InterPro" id="IPR007080">
    <property type="entry name" value="RNA_pol_Rpb1_1"/>
</dbReference>
<dbReference type="InterPro" id="IPR042102">
    <property type="entry name" value="RNA_pol_Rpb1_3_sf"/>
</dbReference>
<dbReference type="InterPro" id="IPR044893">
    <property type="entry name" value="RNA_pol_Rpb1_clamp_domain"/>
</dbReference>
<dbReference type="InterPro" id="IPR034678">
    <property type="entry name" value="RNApol_RpoC1"/>
</dbReference>
<dbReference type="PANTHER" id="PTHR19376">
    <property type="entry name" value="DNA-DIRECTED RNA POLYMERASE"/>
    <property type="match status" value="1"/>
</dbReference>
<dbReference type="PANTHER" id="PTHR19376:SF54">
    <property type="entry name" value="DNA-DIRECTED RNA POLYMERASE SUBUNIT BETA"/>
    <property type="match status" value="1"/>
</dbReference>
<dbReference type="Pfam" id="PF04997">
    <property type="entry name" value="RNA_pol_Rpb1_1"/>
    <property type="match status" value="1"/>
</dbReference>
<dbReference type="Pfam" id="PF00623">
    <property type="entry name" value="RNA_pol_Rpb1_2"/>
    <property type="match status" value="1"/>
</dbReference>
<dbReference type="SMART" id="SM00663">
    <property type="entry name" value="RPOLA_N"/>
    <property type="match status" value="1"/>
</dbReference>
<dbReference type="SUPFAM" id="SSF64484">
    <property type="entry name" value="beta and beta-prime subunits of DNA dependent RNA-polymerase"/>
    <property type="match status" value="1"/>
</dbReference>
<gene>
    <name evidence="1" type="primary">rpoC1</name>
</gene>
<reference key="1">
    <citation type="journal article" date="2008" name="BMC Plant Biol.">
        <title>Comparative chloroplast genomics and phylogenetics of Fagopyrum esculentum ssp. ancestrale - a wild ancestor of cultivated buckwheat.</title>
        <authorList>
            <person name="Logacheva M.D."/>
            <person name="Samigullin T.H."/>
            <person name="Dhingra A."/>
            <person name="Penin A.A."/>
        </authorList>
    </citation>
    <scope>NUCLEOTIDE SEQUENCE [LARGE SCALE GENOMIC DNA]</scope>
</reference>
<protein>
    <recommendedName>
        <fullName evidence="1">DNA-directed RNA polymerase subunit beta'</fullName>
        <ecNumber evidence="1">2.7.7.6</ecNumber>
    </recommendedName>
    <alternativeName>
        <fullName evidence="1">PEP</fullName>
    </alternativeName>
    <alternativeName>
        <fullName evidence="1">Plastid-encoded RNA polymerase subunit beta'</fullName>
        <shortName evidence="1">RNA polymerase subunit beta'</shortName>
    </alternativeName>
</protein>
<accession>B2XWP0</accession>
<sequence>MIDQYKHQQLRIGLVSPQQISAWATKILPNGEIVGEVTKPYTFHYKTNKPEKDGLFCERIFGPIKSGICACGNFRIIGDETEEPKFCEQCAVEFVDSRIRRYQMGYIKLACPVTHVWYLKRLPSYIANFLDKPLKELEGLVYCDFAFARPIAKKPTFLRLRGLFEYEIQSWKYSIPLFFTTQGFDTFRNREISTGASTIREQLADLDLRTILDSSLSEWKEGPTGNEWEDRKVRRRKDFLVRRMELAKHFIRTNIEPEWMVLCLLPVLPPELRPIIQIDGGKLMSSDINELYRRVIYRNNTLTDLLTTSRSTPGELVMCQEKLVQEAVDTLLDNGIRGQPMRDGHNKVYKSFSDVIEGKEGRFRETLLGKRVDYSGRSVIVVGPSLSLHRCGLPREIAIELFQTFVIRGLIRQDLASNIGVAKSKIRENEPIVWEILQEVMRGHPVLLNRAPTLHRLGIQAFQPTLVEGRAICLHPLVCKGFNADFDGDQMAVHVPLSLEAQAEARLLMFSHMNLLSPAIGDPISVPTQDMLIGLYVLTSGNRRGICANRYNPWSRKNYKNEKWNDHNYKYMKEPFFCNSYDAIGAYRQKRINLDSPLWLRWQLDHRVVASREAPIEVHYESLGTYHEIYGNYLIVRSVKKEIIFIYIRTTVGHISFYREIEEAIQGFYRACSYGT</sequence>